<evidence type="ECO:0000255" key="1">
    <source>
        <dbReference type="HAMAP-Rule" id="MF_00059"/>
    </source>
</evidence>
<accession>Q5HSJ6</accession>
<dbReference type="EC" id="2.7.7.6" evidence="1"/>
<dbReference type="EMBL" id="CP000025">
    <property type="protein sequence ID" value="AAW36191.1"/>
    <property type="molecule type" value="Genomic_DNA"/>
</dbReference>
<dbReference type="RefSeq" id="WP_002855748.1">
    <property type="nucleotide sequence ID" value="NC_003912.7"/>
</dbReference>
<dbReference type="SMR" id="Q5HSJ6"/>
<dbReference type="KEGG" id="cjr:CJE1767"/>
<dbReference type="HOGENOM" id="CLU_053084_0_1_7"/>
<dbReference type="GO" id="GO:0005737">
    <property type="term" value="C:cytoplasm"/>
    <property type="evidence" value="ECO:0007669"/>
    <property type="project" value="UniProtKB-ARBA"/>
</dbReference>
<dbReference type="GO" id="GO:0000428">
    <property type="term" value="C:DNA-directed RNA polymerase complex"/>
    <property type="evidence" value="ECO:0007669"/>
    <property type="project" value="UniProtKB-KW"/>
</dbReference>
<dbReference type="GO" id="GO:0003677">
    <property type="term" value="F:DNA binding"/>
    <property type="evidence" value="ECO:0007669"/>
    <property type="project" value="UniProtKB-UniRule"/>
</dbReference>
<dbReference type="GO" id="GO:0003899">
    <property type="term" value="F:DNA-directed RNA polymerase activity"/>
    <property type="evidence" value="ECO:0007669"/>
    <property type="project" value="UniProtKB-UniRule"/>
</dbReference>
<dbReference type="GO" id="GO:0046983">
    <property type="term" value="F:protein dimerization activity"/>
    <property type="evidence" value="ECO:0007669"/>
    <property type="project" value="InterPro"/>
</dbReference>
<dbReference type="GO" id="GO:0006351">
    <property type="term" value="P:DNA-templated transcription"/>
    <property type="evidence" value="ECO:0007669"/>
    <property type="project" value="UniProtKB-UniRule"/>
</dbReference>
<dbReference type="CDD" id="cd06928">
    <property type="entry name" value="RNAP_alpha_NTD"/>
    <property type="match status" value="1"/>
</dbReference>
<dbReference type="Gene3D" id="1.10.150.20">
    <property type="entry name" value="5' to 3' exonuclease, C-terminal subdomain"/>
    <property type="match status" value="1"/>
</dbReference>
<dbReference type="Gene3D" id="2.170.120.12">
    <property type="entry name" value="DNA-directed RNA polymerase, insert domain"/>
    <property type="match status" value="1"/>
</dbReference>
<dbReference type="Gene3D" id="3.30.1360.10">
    <property type="entry name" value="RNA polymerase, RBP11-like subunit"/>
    <property type="match status" value="1"/>
</dbReference>
<dbReference type="HAMAP" id="MF_00059">
    <property type="entry name" value="RNApol_bact_RpoA"/>
    <property type="match status" value="1"/>
</dbReference>
<dbReference type="InterPro" id="IPR011262">
    <property type="entry name" value="DNA-dir_RNA_pol_insert"/>
</dbReference>
<dbReference type="InterPro" id="IPR011263">
    <property type="entry name" value="DNA-dir_RNA_pol_RpoA/D/Rpb3"/>
</dbReference>
<dbReference type="InterPro" id="IPR011773">
    <property type="entry name" value="DNA-dir_RpoA"/>
</dbReference>
<dbReference type="InterPro" id="IPR036603">
    <property type="entry name" value="RBP11-like"/>
</dbReference>
<dbReference type="InterPro" id="IPR011260">
    <property type="entry name" value="RNAP_asu_C"/>
</dbReference>
<dbReference type="InterPro" id="IPR036643">
    <property type="entry name" value="RNApol_insert_sf"/>
</dbReference>
<dbReference type="NCBIfam" id="NF003517">
    <property type="entry name" value="PRK05182.2-3"/>
    <property type="match status" value="1"/>
</dbReference>
<dbReference type="NCBIfam" id="NF003519">
    <property type="entry name" value="PRK05182.2-5"/>
    <property type="match status" value="1"/>
</dbReference>
<dbReference type="NCBIfam" id="TIGR02027">
    <property type="entry name" value="rpoA"/>
    <property type="match status" value="1"/>
</dbReference>
<dbReference type="Pfam" id="PF01000">
    <property type="entry name" value="RNA_pol_A_bac"/>
    <property type="match status" value="1"/>
</dbReference>
<dbReference type="Pfam" id="PF03118">
    <property type="entry name" value="RNA_pol_A_CTD"/>
    <property type="match status" value="1"/>
</dbReference>
<dbReference type="Pfam" id="PF01193">
    <property type="entry name" value="RNA_pol_L"/>
    <property type="match status" value="1"/>
</dbReference>
<dbReference type="SMART" id="SM00662">
    <property type="entry name" value="RPOLD"/>
    <property type="match status" value="1"/>
</dbReference>
<dbReference type="SUPFAM" id="SSF47789">
    <property type="entry name" value="C-terminal domain of RNA polymerase alpha subunit"/>
    <property type="match status" value="1"/>
</dbReference>
<dbReference type="SUPFAM" id="SSF56553">
    <property type="entry name" value="Insert subdomain of RNA polymerase alpha subunit"/>
    <property type="match status" value="1"/>
</dbReference>
<dbReference type="SUPFAM" id="SSF55257">
    <property type="entry name" value="RBP11-like subunits of RNA polymerase"/>
    <property type="match status" value="1"/>
</dbReference>
<gene>
    <name evidence="1" type="primary">rpoA</name>
    <name type="ordered locus">CJE1767</name>
</gene>
<proteinExistence type="inferred from homology"/>
<name>RPOA_CAMJR</name>
<sequence length="337" mass="37700">MRNITTSAYTPTEFTIENISDTVAKISAWPFEIGYGITLAHPLRRLLYTSTIGYAPTAIHIDGVAHEFDSMRGMLEDVALFIINLKKLRFKIKGESNKEIVEFSFKGSKEIYGKDLNNDQVEVVNKDAYLATINEDAELKFTLIVEKGIGYVPSEEIKELINDPKFIALDAFFTPVREATYDIEKVLFEDNPDYEKVVLTVTTDGQITPNEAFQNALEAMYKQLSVFDKITNVRSVIKNQATSNELENTKLLQNITDLNLSARSYNCLEKAGVVYIGELALMSVSELAGLKNLGKKSLDEIKNIMESIGFPVGTSKLSDNKEILKNKIAELKAQNEG</sequence>
<comment type="function">
    <text evidence="1">DNA-dependent RNA polymerase catalyzes the transcription of DNA into RNA using the four ribonucleoside triphosphates as substrates.</text>
</comment>
<comment type="catalytic activity">
    <reaction evidence="1">
        <text>RNA(n) + a ribonucleoside 5'-triphosphate = RNA(n+1) + diphosphate</text>
        <dbReference type="Rhea" id="RHEA:21248"/>
        <dbReference type="Rhea" id="RHEA-COMP:14527"/>
        <dbReference type="Rhea" id="RHEA-COMP:17342"/>
        <dbReference type="ChEBI" id="CHEBI:33019"/>
        <dbReference type="ChEBI" id="CHEBI:61557"/>
        <dbReference type="ChEBI" id="CHEBI:140395"/>
        <dbReference type="EC" id="2.7.7.6"/>
    </reaction>
</comment>
<comment type="subunit">
    <text evidence="1">Homodimer. The RNAP catalytic core consists of 2 alpha, 1 beta, 1 beta' and 1 omega subunit. When a sigma factor is associated with the core the holoenzyme is formed, which can initiate transcription.</text>
</comment>
<comment type="domain">
    <text evidence="1">The N-terminal domain is essential for RNAP assembly and basal transcription, whereas the C-terminal domain is involved in interaction with transcriptional regulators and with upstream promoter elements.</text>
</comment>
<comment type="similarity">
    <text evidence="1">Belongs to the RNA polymerase alpha chain family.</text>
</comment>
<protein>
    <recommendedName>
        <fullName evidence="1">DNA-directed RNA polymerase subunit alpha</fullName>
        <shortName evidence="1">RNAP subunit alpha</shortName>
        <ecNumber evidence="1">2.7.7.6</ecNumber>
    </recommendedName>
    <alternativeName>
        <fullName evidence="1">RNA polymerase subunit alpha</fullName>
    </alternativeName>
    <alternativeName>
        <fullName evidence="1">Transcriptase subunit alpha</fullName>
    </alternativeName>
</protein>
<reference key="1">
    <citation type="journal article" date="2005" name="PLoS Biol.">
        <title>Major structural differences and novel potential virulence mechanisms from the genomes of multiple Campylobacter species.</title>
        <authorList>
            <person name="Fouts D.E."/>
            <person name="Mongodin E.F."/>
            <person name="Mandrell R.E."/>
            <person name="Miller W.G."/>
            <person name="Rasko D.A."/>
            <person name="Ravel J."/>
            <person name="Brinkac L.M."/>
            <person name="DeBoy R.T."/>
            <person name="Parker C.T."/>
            <person name="Daugherty S.C."/>
            <person name="Dodson R.J."/>
            <person name="Durkin A.S."/>
            <person name="Madupu R."/>
            <person name="Sullivan S.A."/>
            <person name="Shetty J.U."/>
            <person name="Ayodeji M.A."/>
            <person name="Shvartsbeyn A."/>
            <person name="Schatz M.C."/>
            <person name="Badger J.H."/>
            <person name="Fraser C.M."/>
            <person name="Nelson K.E."/>
        </authorList>
    </citation>
    <scope>NUCLEOTIDE SEQUENCE [LARGE SCALE GENOMIC DNA]</scope>
    <source>
        <strain>RM1221</strain>
    </source>
</reference>
<organism>
    <name type="scientific">Campylobacter jejuni (strain RM1221)</name>
    <dbReference type="NCBI Taxonomy" id="195099"/>
    <lineage>
        <taxon>Bacteria</taxon>
        <taxon>Pseudomonadati</taxon>
        <taxon>Campylobacterota</taxon>
        <taxon>Epsilonproteobacteria</taxon>
        <taxon>Campylobacterales</taxon>
        <taxon>Campylobacteraceae</taxon>
        <taxon>Campylobacter</taxon>
    </lineage>
</organism>
<keyword id="KW-0240">DNA-directed RNA polymerase</keyword>
<keyword id="KW-0548">Nucleotidyltransferase</keyword>
<keyword id="KW-0804">Transcription</keyword>
<keyword id="KW-0808">Transferase</keyword>
<feature type="chain" id="PRO_0000175285" description="DNA-directed RNA polymerase subunit alpha">
    <location>
        <begin position="1"/>
        <end position="337"/>
    </location>
</feature>
<feature type="region of interest" description="Alpha N-terminal domain (alpha-NTD)" evidence="1">
    <location>
        <begin position="1"/>
        <end position="231"/>
    </location>
</feature>
<feature type="region of interest" description="Alpha C-terminal domain (alpha-CTD)" evidence="1">
    <location>
        <begin position="247"/>
        <end position="337"/>
    </location>
</feature>